<accession>P9WIR2</accession>
<accession>L0T434</accession>
<accession>O53774</accession>
<accession>P0A5N8</accession>
<name>CFP32_MYCTO</name>
<keyword id="KW-1185">Reference proteome</keyword>
<keyword id="KW-0677">Repeat</keyword>
<keyword id="KW-0964">Secreted</keyword>
<organism>
    <name type="scientific">Mycobacterium tuberculosis (strain CDC 1551 / Oshkosh)</name>
    <dbReference type="NCBI Taxonomy" id="83331"/>
    <lineage>
        <taxon>Bacteria</taxon>
        <taxon>Bacillati</taxon>
        <taxon>Actinomycetota</taxon>
        <taxon>Actinomycetes</taxon>
        <taxon>Mycobacteriales</taxon>
        <taxon>Mycobacteriaceae</taxon>
        <taxon>Mycobacterium</taxon>
        <taxon>Mycobacterium tuberculosis complex</taxon>
    </lineage>
</organism>
<protein>
    <recommendedName>
        <fullName evidence="3">Putative glyoxylase CFP32</fullName>
    </recommendedName>
    <alternativeName>
        <fullName evidence="3">27 kDa antigen Cfp30B</fullName>
    </alternativeName>
</protein>
<evidence type="ECO:0000250" key="1">
    <source>
        <dbReference type="UniProtKB" id="P9WIR3"/>
    </source>
</evidence>
<evidence type="ECO:0000255" key="2">
    <source>
        <dbReference type="PROSITE-ProRule" id="PRU01163"/>
    </source>
</evidence>
<evidence type="ECO:0000305" key="3"/>
<proteinExistence type="inferred from homology"/>
<gene>
    <name evidence="1" type="primary">cfp32</name>
    <name type="synonym">cfp30B</name>
    <name type="synonym">TB27.3</name>
    <name type="ordered locus">MT0606</name>
</gene>
<dbReference type="EMBL" id="AE000516">
    <property type="protein sequence ID" value="AAK44829.1"/>
    <property type="status" value="ALT_INIT"/>
    <property type="molecule type" value="Genomic_DNA"/>
</dbReference>
<dbReference type="PIR" id="H70933">
    <property type="entry name" value="H70933"/>
</dbReference>
<dbReference type="RefSeq" id="WP_003403012.1">
    <property type="nucleotide sequence ID" value="NZ_KK341227.1"/>
</dbReference>
<dbReference type="BMRB" id="P9WIR2"/>
<dbReference type="SMR" id="P9WIR2"/>
<dbReference type="KEGG" id="mtc:MT0606"/>
<dbReference type="PATRIC" id="fig|83331.31.peg.637"/>
<dbReference type="HOGENOM" id="CLU_069623_2_0_11"/>
<dbReference type="Proteomes" id="UP000001020">
    <property type="component" value="Chromosome"/>
</dbReference>
<dbReference type="GO" id="GO:0005576">
    <property type="term" value="C:extracellular region"/>
    <property type="evidence" value="ECO:0007669"/>
    <property type="project" value="UniProtKB-SubCell"/>
</dbReference>
<dbReference type="CDD" id="cd07247">
    <property type="entry name" value="SgaA_N_like"/>
    <property type="match status" value="2"/>
</dbReference>
<dbReference type="FunFam" id="3.10.180.10:FF:000043">
    <property type="entry name" value="27 kDa antigen Cfp30B"/>
    <property type="match status" value="1"/>
</dbReference>
<dbReference type="Gene3D" id="3.10.180.10">
    <property type="entry name" value="2,3-Dihydroxybiphenyl 1,2-Dioxygenase, domain 1"/>
    <property type="match status" value="2"/>
</dbReference>
<dbReference type="InterPro" id="IPR052164">
    <property type="entry name" value="Anthracycline_SecMetBiosynth"/>
</dbReference>
<dbReference type="InterPro" id="IPR029068">
    <property type="entry name" value="Glyas_Bleomycin-R_OHBP_Dase"/>
</dbReference>
<dbReference type="InterPro" id="IPR004360">
    <property type="entry name" value="Glyas_Fos-R_dOase_dom"/>
</dbReference>
<dbReference type="InterPro" id="IPR037523">
    <property type="entry name" value="VOC"/>
</dbReference>
<dbReference type="PANTHER" id="PTHR33993:SF14">
    <property type="entry name" value="GB|AAF24581.1"/>
    <property type="match status" value="1"/>
</dbReference>
<dbReference type="PANTHER" id="PTHR33993">
    <property type="entry name" value="GLYOXALASE-RELATED"/>
    <property type="match status" value="1"/>
</dbReference>
<dbReference type="Pfam" id="PF00903">
    <property type="entry name" value="Glyoxalase"/>
    <property type="match status" value="2"/>
</dbReference>
<dbReference type="SUPFAM" id="SSF54593">
    <property type="entry name" value="Glyoxalase/Bleomycin resistance protein/Dihydroxybiphenyl dioxygenase"/>
    <property type="match status" value="2"/>
</dbReference>
<dbReference type="PROSITE" id="PS51819">
    <property type="entry name" value="VOC"/>
    <property type="match status" value="2"/>
</dbReference>
<feature type="chain" id="PRO_0000427960" description="Putative glyoxylase CFP32">
    <location>
        <begin position="1"/>
        <end position="261"/>
    </location>
</feature>
<feature type="domain" description="VOC 1" evidence="2">
    <location>
        <begin position="11"/>
        <end position="129"/>
    </location>
</feature>
<feature type="domain" description="VOC 2" evidence="2">
    <location>
        <begin position="143"/>
        <end position="257"/>
    </location>
</feature>
<feature type="region of interest" description="Glyoxalase 1" evidence="3">
    <location>
        <begin position="13"/>
        <end position="123"/>
    </location>
</feature>
<feature type="region of interest" description="Glyoxalase 2" evidence="3">
    <location>
        <begin position="149"/>
        <end position="252"/>
    </location>
</feature>
<comment type="function">
    <text evidence="1">May function as a glyoxylase involved in the methylglyoxal detoxification pathway. Induces maturation of dendritic cells in a TLR2-dependent manner, causing increased expression of cell-surface molecules (CD80, CD86, MHC class I and II) and pro-inflammatory cytokines (TNF-alpha, IL-6, IL-1 beta and IL-12p70). Acts via both the NF-kappa-B and MAPK signaling pathways. Induces Th1-polarized immune responses.</text>
</comment>
<comment type="subunit">
    <text evidence="1">Interacts with human TLR2.</text>
</comment>
<comment type="subcellular location">
    <subcellularLocation>
        <location evidence="1">Secreted</location>
    </subcellularLocation>
</comment>
<comment type="sequence caution" evidence="3">
    <conflict type="erroneous initiation">
        <sequence resource="EMBL-CDS" id="AAK44829"/>
    </conflict>
</comment>
<reference key="1">
    <citation type="journal article" date="2002" name="J. Bacteriol.">
        <title>Whole-genome comparison of Mycobacterium tuberculosis clinical and laboratory strains.</title>
        <authorList>
            <person name="Fleischmann R.D."/>
            <person name="Alland D."/>
            <person name="Eisen J.A."/>
            <person name="Carpenter L."/>
            <person name="White O."/>
            <person name="Peterson J.D."/>
            <person name="DeBoy R.T."/>
            <person name="Dodson R.J."/>
            <person name="Gwinn M.L."/>
            <person name="Haft D.H."/>
            <person name="Hickey E.K."/>
            <person name="Kolonay J.F."/>
            <person name="Nelson W.C."/>
            <person name="Umayam L.A."/>
            <person name="Ermolaeva M.D."/>
            <person name="Salzberg S.L."/>
            <person name="Delcher A."/>
            <person name="Utterback T.R."/>
            <person name="Weidman J.F."/>
            <person name="Khouri H.M."/>
            <person name="Gill J."/>
            <person name="Mikula A."/>
            <person name="Bishai W."/>
            <person name="Jacobs W.R. Jr."/>
            <person name="Venter J.C."/>
            <person name="Fraser C.M."/>
        </authorList>
    </citation>
    <scope>NUCLEOTIDE SEQUENCE [LARGE SCALE GENOMIC DNA]</scope>
    <source>
        <strain>CDC 1551 / Oshkosh</strain>
    </source>
</reference>
<sequence length="261" mass="27343">MPKRSEYRQGTPNWVDLQTTDQSAAKKFYTSLFGWGYDDNPVPGGGGVYSMATLNGEAVAAIAPMPPGAPEGMPPIWNTYIAVDDVDAVVDKVVPGGGQVMMPAFDIGDAGRMSFITDPTGAAVGLWQANRHIGATLVNETGTLIWNELLTDKPDLALAFYEAVVGLTHSSMEIAAGQNYRVLKAGDAEVGGCMEPPMPGVPNHWHVYFAVDDADATAAKAAAAGGQVIAEPADIPSVGRFAVLSDPQGAIFSVLKPAPQQ</sequence>